<reference key="1">
    <citation type="journal article" date="2005" name="Nature">
        <title>The genome of the social amoeba Dictyostelium discoideum.</title>
        <authorList>
            <person name="Eichinger L."/>
            <person name="Pachebat J.A."/>
            <person name="Gloeckner G."/>
            <person name="Rajandream M.A."/>
            <person name="Sucgang R."/>
            <person name="Berriman M."/>
            <person name="Song J."/>
            <person name="Olsen R."/>
            <person name="Szafranski K."/>
            <person name="Xu Q."/>
            <person name="Tunggal B."/>
            <person name="Kummerfeld S."/>
            <person name="Madera M."/>
            <person name="Konfortov B.A."/>
            <person name="Rivero F."/>
            <person name="Bankier A.T."/>
            <person name="Lehmann R."/>
            <person name="Hamlin N."/>
            <person name="Davies R."/>
            <person name="Gaudet P."/>
            <person name="Fey P."/>
            <person name="Pilcher K."/>
            <person name="Chen G."/>
            <person name="Saunders D."/>
            <person name="Sodergren E.J."/>
            <person name="Davis P."/>
            <person name="Kerhornou A."/>
            <person name="Nie X."/>
            <person name="Hall N."/>
            <person name="Anjard C."/>
            <person name="Hemphill L."/>
            <person name="Bason N."/>
            <person name="Farbrother P."/>
            <person name="Desany B."/>
            <person name="Just E."/>
            <person name="Morio T."/>
            <person name="Rost R."/>
            <person name="Churcher C.M."/>
            <person name="Cooper J."/>
            <person name="Haydock S."/>
            <person name="van Driessche N."/>
            <person name="Cronin A."/>
            <person name="Goodhead I."/>
            <person name="Muzny D.M."/>
            <person name="Mourier T."/>
            <person name="Pain A."/>
            <person name="Lu M."/>
            <person name="Harper D."/>
            <person name="Lindsay R."/>
            <person name="Hauser H."/>
            <person name="James K.D."/>
            <person name="Quiles M."/>
            <person name="Madan Babu M."/>
            <person name="Saito T."/>
            <person name="Buchrieser C."/>
            <person name="Wardroper A."/>
            <person name="Felder M."/>
            <person name="Thangavelu M."/>
            <person name="Johnson D."/>
            <person name="Knights A."/>
            <person name="Loulseged H."/>
            <person name="Mungall K.L."/>
            <person name="Oliver K."/>
            <person name="Price C."/>
            <person name="Quail M.A."/>
            <person name="Urushihara H."/>
            <person name="Hernandez J."/>
            <person name="Rabbinowitsch E."/>
            <person name="Steffen D."/>
            <person name="Sanders M."/>
            <person name="Ma J."/>
            <person name="Kohara Y."/>
            <person name="Sharp S."/>
            <person name="Simmonds M.N."/>
            <person name="Spiegler S."/>
            <person name="Tivey A."/>
            <person name="Sugano S."/>
            <person name="White B."/>
            <person name="Walker D."/>
            <person name="Woodward J.R."/>
            <person name="Winckler T."/>
            <person name="Tanaka Y."/>
            <person name="Shaulsky G."/>
            <person name="Schleicher M."/>
            <person name="Weinstock G.M."/>
            <person name="Rosenthal A."/>
            <person name="Cox E.C."/>
            <person name="Chisholm R.L."/>
            <person name="Gibbs R.A."/>
            <person name="Loomis W.F."/>
            <person name="Platzer M."/>
            <person name="Kay R.R."/>
            <person name="Williams J.G."/>
            <person name="Dear P.H."/>
            <person name="Noegel A.A."/>
            <person name="Barrell B.G."/>
            <person name="Kuspa A."/>
        </authorList>
    </citation>
    <scope>NUCLEOTIDE SEQUENCE [LARGE SCALE GENOMIC DNA]</scope>
    <source>
        <strain>AX4</strain>
    </source>
</reference>
<dbReference type="EMBL" id="AAFI02000074">
    <property type="protein sequence ID" value="EAL64878.1"/>
    <property type="molecule type" value="Genomic_DNA"/>
</dbReference>
<dbReference type="RefSeq" id="XP_639885.1">
    <property type="nucleotide sequence ID" value="XM_634793.1"/>
</dbReference>
<dbReference type="SMR" id="Q54NN1"/>
<dbReference type="FunCoup" id="Q54NN1">
    <property type="interactions" value="689"/>
</dbReference>
<dbReference type="STRING" id="44689.Q54NN1"/>
<dbReference type="PaxDb" id="44689-DDB0266773"/>
<dbReference type="EnsemblProtists" id="EAL64878">
    <property type="protein sequence ID" value="EAL64878"/>
    <property type="gene ID" value="DDB_G0285131"/>
</dbReference>
<dbReference type="GeneID" id="8624956"/>
<dbReference type="KEGG" id="ddi:DDB_G0285131"/>
<dbReference type="dictyBase" id="DDB_G0285131">
    <property type="gene designation" value="derl2"/>
</dbReference>
<dbReference type="VEuPathDB" id="AmoebaDB:DDB_G0285131"/>
<dbReference type="eggNOG" id="KOG0858">
    <property type="taxonomic scope" value="Eukaryota"/>
</dbReference>
<dbReference type="HOGENOM" id="CLU_051898_5_2_1"/>
<dbReference type="InParanoid" id="Q54NN1"/>
<dbReference type="OMA" id="FKSQYWR"/>
<dbReference type="PhylomeDB" id="Q54NN1"/>
<dbReference type="PRO" id="PR:Q54NN1"/>
<dbReference type="Proteomes" id="UP000002195">
    <property type="component" value="Chromosome 4"/>
</dbReference>
<dbReference type="GO" id="GO:0005789">
    <property type="term" value="C:endoplasmic reticulum membrane"/>
    <property type="evidence" value="ECO:0000250"/>
    <property type="project" value="dictyBase"/>
</dbReference>
<dbReference type="GO" id="GO:0005047">
    <property type="term" value="F:signal recognition particle binding"/>
    <property type="evidence" value="ECO:0000250"/>
    <property type="project" value="UniProtKB"/>
</dbReference>
<dbReference type="GO" id="GO:0030968">
    <property type="term" value="P:endoplasmic reticulum unfolded protein response"/>
    <property type="evidence" value="ECO:0000318"/>
    <property type="project" value="GO_Central"/>
</dbReference>
<dbReference type="GO" id="GO:0036503">
    <property type="term" value="P:ERAD pathway"/>
    <property type="evidence" value="ECO:0000318"/>
    <property type="project" value="GO_Central"/>
</dbReference>
<dbReference type="GO" id="GO:1904152">
    <property type="term" value="P:regulation of retrograde protein transport, ER to cytosol"/>
    <property type="evidence" value="ECO:0000250"/>
    <property type="project" value="dictyBase"/>
</dbReference>
<dbReference type="InterPro" id="IPR007599">
    <property type="entry name" value="DER1"/>
</dbReference>
<dbReference type="InterPro" id="IPR035952">
    <property type="entry name" value="Rhomboid-like_sf"/>
</dbReference>
<dbReference type="PANTHER" id="PTHR11009">
    <property type="entry name" value="DER1-LIKE PROTEIN, DERLIN"/>
    <property type="match status" value="1"/>
</dbReference>
<dbReference type="Pfam" id="PF04511">
    <property type="entry name" value="DER1"/>
    <property type="match status" value="1"/>
</dbReference>
<dbReference type="SUPFAM" id="SSF144091">
    <property type="entry name" value="Rhomboid-like"/>
    <property type="match status" value="1"/>
</dbReference>
<evidence type="ECO:0000250" key="1">
    <source>
        <dbReference type="UniProtKB" id="Q9GZP9"/>
    </source>
</evidence>
<evidence type="ECO:0000255" key="2"/>
<evidence type="ECO:0000305" key="3"/>
<feature type="chain" id="PRO_0000328359" description="Probable derlin-2 homolog">
    <location>
        <begin position="1"/>
        <end position="254"/>
    </location>
</feature>
<feature type="topological domain" description="Cytoplasmic" evidence="2">
    <location>
        <begin position="1"/>
        <end position="17"/>
    </location>
</feature>
<feature type="transmembrane region" description="Helical" evidence="2">
    <location>
        <begin position="18"/>
        <end position="38"/>
    </location>
</feature>
<feature type="topological domain" description="Lumenal" evidence="2">
    <location>
        <begin position="39"/>
        <end position="95"/>
    </location>
</feature>
<feature type="transmembrane region" description="Helical" evidence="2">
    <location>
        <begin position="96"/>
        <end position="116"/>
    </location>
</feature>
<feature type="topological domain" description="Cytoplasmic" evidence="2">
    <location>
        <begin position="117"/>
        <end position="118"/>
    </location>
</feature>
<feature type="transmembrane region" description="Helical" evidence="2">
    <location>
        <begin position="119"/>
        <end position="139"/>
    </location>
</feature>
<feature type="topological domain" description="Lumenal" evidence="2">
    <location>
        <begin position="140"/>
        <end position="146"/>
    </location>
</feature>
<feature type="transmembrane region" description="Helical" evidence="2">
    <location>
        <begin position="147"/>
        <end position="167"/>
    </location>
</feature>
<feature type="topological domain" description="Cytoplasmic" evidence="2">
    <location>
        <begin position="168"/>
        <end position="254"/>
    </location>
</feature>
<proteinExistence type="inferred from homology"/>
<organism>
    <name type="scientific">Dictyostelium discoideum</name>
    <name type="common">Social amoeba</name>
    <dbReference type="NCBI Taxonomy" id="44689"/>
    <lineage>
        <taxon>Eukaryota</taxon>
        <taxon>Amoebozoa</taxon>
        <taxon>Evosea</taxon>
        <taxon>Eumycetozoa</taxon>
        <taxon>Dictyostelia</taxon>
        <taxon>Dictyosteliales</taxon>
        <taxon>Dictyosteliaceae</taxon>
        <taxon>Dictyostelium</taxon>
    </lineage>
</organism>
<protein>
    <recommendedName>
        <fullName evidence="3">Probable derlin-2 homolog</fullName>
    </recommendedName>
</protein>
<name>DERL2_DICDI</name>
<accession>Q54NN1</accession>
<sequence>MAQPFEDWYKNLPIVTKIYMTGCVVTSVSVYLGLVGPLRLYLNFPLVFGKYEFWRLFTNFFFYDEIGMNFFFHMYFLVRHSRLLEESSFRGRSADYLFMWIFGSFLLLIMDAFLFYTKIVTKVLFLAPSIAFMVIYVWSRRNPNMHISFLGLFTFSAPYLPWVILIMGYLFNHDLTTDLLGAVAGHAYYFLEDAYPLISNRRLLKTPGFLKNLMDGQEQPIVDAHQQQEVQQAQQQEVQQPVQNFLNEDDLDQQ</sequence>
<comment type="function">
    <text evidence="1">May be involved in the degradation process of specific misfolded endoplasmic reticulum (ER) luminal proteins. May also be involved in endoplasmic reticulum stress-induced pre-emptive quality control, a mechanism that selectively attenuates the translocation of newly synthesized proteins into the endoplasmic reticulum and reroutes them to the cytosol for proteasomal degradation.</text>
</comment>
<comment type="subcellular location">
    <subcellularLocation>
        <location evidence="1">Endoplasmic reticulum membrane</location>
        <topology evidence="1">Multi-pass membrane protein</topology>
    </subcellularLocation>
</comment>
<comment type="similarity">
    <text evidence="3">Belongs to the derlin family.</text>
</comment>
<gene>
    <name type="primary">derl2</name>
    <name type="ORF">DDB_G0285131</name>
</gene>
<keyword id="KW-0256">Endoplasmic reticulum</keyword>
<keyword id="KW-0472">Membrane</keyword>
<keyword id="KW-1185">Reference proteome</keyword>
<keyword id="KW-0812">Transmembrane</keyword>
<keyword id="KW-1133">Transmembrane helix</keyword>
<keyword id="KW-0834">Unfolded protein response</keyword>